<gene>
    <name evidence="1" type="primary">atpI</name>
</gene>
<name>ATPI_NYMAL</name>
<organism>
    <name type="scientific">Nymphaea alba</name>
    <name type="common">White water-lily</name>
    <name type="synonym">Castalia alba</name>
    <dbReference type="NCBI Taxonomy" id="34301"/>
    <lineage>
        <taxon>Eukaryota</taxon>
        <taxon>Viridiplantae</taxon>
        <taxon>Streptophyta</taxon>
        <taxon>Embryophyta</taxon>
        <taxon>Tracheophyta</taxon>
        <taxon>Spermatophyta</taxon>
        <taxon>Magnoliopsida</taxon>
        <taxon>Nymphaeales</taxon>
        <taxon>Nymphaeaceae</taxon>
        <taxon>Nymphaea</taxon>
    </lineage>
</organism>
<geneLocation type="chloroplast"/>
<protein>
    <recommendedName>
        <fullName evidence="1">ATP synthase subunit a, chloroplastic</fullName>
    </recommendedName>
    <alternativeName>
        <fullName evidence="1">ATP synthase F0 sector subunit a</fullName>
    </alternativeName>
    <alternativeName>
        <fullName evidence="1">F-ATPase subunit IV</fullName>
    </alternativeName>
</protein>
<accession>Q6EW60</accession>
<keyword id="KW-0066">ATP synthesis</keyword>
<keyword id="KW-0138">CF(0)</keyword>
<keyword id="KW-0150">Chloroplast</keyword>
<keyword id="KW-0375">Hydrogen ion transport</keyword>
<keyword id="KW-0406">Ion transport</keyword>
<keyword id="KW-0472">Membrane</keyword>
<keyword id="KW-0934">Plastid</keyword>
<keyword id="KW-0793">Thylakoid</keyword>
<keyword id="KW-0812">Transmembrane</keyword>
<keyword id="KW-1133">Transmembrane helix</keyword>
<keyword id="KW-0813">Transport</keyword>
<comment type="function">
    <text evidence="1">Key component of the proton channel; it plays a direct role in the translocation of protons across the membrane.</text>
</comment>
<comment type="subunit">
    <text evidence="1">F-type ATPases have 2 components, CF(1) - the catalytic core - and CF(0) - the membrane proton channel. CF(1) has five subunits: alpha(3), beta(3), gamma(1), delta(1), epsilon(1). CF(0) has four main subunits: a, b, b' and c.</text>
</comment>
<comment type="subcellular location">
    <subcellularLocation>
        <location evidence="1">Plastid</location>
        <location evidence="1">Chloroplast thylakoid membrane</location>
        <topology evidence="1">Multi-pass membrane protein</topology>
    </subcellularLocation>
</comment>
<comment type="similarity">
    <text evidence="1">Belongs to the ATPase A chain family.</text>
</comment>
<dbReference type="EMBL" id="AJ627251">
    <property type="protein sequence ID" value="CAF28581.1"/>
    <property type="molecule type" value="Genomic_DNA"/>
</dbReference>
<dbReference type="RefSeq" id="YP_053143.1">
    <property type="nucleotide sequence ID" value="NC_006050.1"/>
</dbReference>
<dbReference type="SMR" id="Q6EW60"/>
<dbReference type="GeneID" id="2896172"/>
<dbReference type="GO" id="GO:0009535">
    <property type="term" value="C:chloroplast thylakoid membrane"/>
    <property type="evidence" value="ECO:0007669"/>
    <property type="project" value="UniProtKB-SubCell"/>
</dbReference>
<dbReference type="GO" id="GO:0005886">
    <property type="term" value="C:plasma membrane"/>
    <property type="evidence" value="ECO:0007669"/>
    <property type="project" value="UniProtKB-UniRule"/>
</dbReference>
<dbReference type="GO" id="GO:0045259">
    <property type="term" value="C:proton-transporting ATP synthase complex"/>
    <property type="evidence" value="ECO:0007669"/>
    <property type="project" value="UniProtKB-KW"/>
</dbReference>
<dbReference type="GO" id="GO:0046933">
    <property type="term" value="F:proton-transporting ATP synthase activity, rotational mechanism"/>
    <property type="evidence" value="ECO:0007669"/>
    <property type="project" value="UniProtKB-UniRule"/>
</dbReference>
<dbReference type="CDD" id="cd00310">
    <property type="entry name" value="ATP-synt_Fo_a_6"/>
    <property type="match status" value="1"/>
</dbReference>
<dbReference type="FunFam" id="1.20.120.220:FF:000001">
    <property type="entry name" value="ATP synthase subunit a, chloroplastic"/>
    <property type="match status" value="1"/>
</dbReference>
<dbReference type="Gene3D" id="1.20.120.220">
    <property type="entry name" value="ATP synthase, F0 complex, subunit A"/>
    <property type="match status" value="1"/>
</dbReference>
<dbReference type="HAMAP" id="MF_01393">
    <property type="entry name" value="ATP_synth_a_bact"/>
    <property type="match status" value="1"/>
</dbReference>
<dbReference type="InterPro" id="IPR045082">
    <property type="entry name" value="ATP_syn_F0_a_bact/chloroplast"/>
</dbReference>
<dbReference type="InterPro" id="IPR000568">
    <property type="entry name" value="ATP_synth_F0_asu"/>
</dbReference>
<dbReference type="InterPro" id="IPR023011">
    <property type="entry name" value="ATP_synth_F0_asu_AS"/>
</dbReference>
<dbReference type="InterPro" id="IPR035908">
    <property type="entry name" value="F0_ATP_A_sf"/>
</dbReference>
<dbReference type="NCBIfam" id="TIGR01131">
    <property type="entry name" value="ATP_synt_6_or_A"/>
    <property type="match status" value="1"/>
</dbReference>
<dbReference type="PANTHER" id="PTHR42823">
    <property type="entry name" value="ATP SYNTHASE SUBUNIT A, CHLOROPLASTIC"/>
    <property type="match status" value="1"/>
</dbReference>
<dbReference type="PANTHER" id="PTHR42823:SF3">
    <property type="entry name" value="ATP SYNTHASE SUBUNIT A, CHLOROPLASTIC"/>
    <property type="match status" value="1"/>
</dbReference>
<dbReference type="Pfam" id="PF00119">
    <property type="entry name" value="ATP-synt_A"/>
    <property type="match status" value="1"/>
</dbReference>
<dbReference type="PRINTS" id="PR00123">
    <property type="entry name" value="ATPASEA"/>
</dbReference>
<dbReference type="SUPFAM" id="SSF81336">
    <property type="entry name" value="F1F0 ATP synthase subunit A"/>
    <property type="match status" value="1"/>
</dbReference>
<dbReference type="PROSITE" id="PS00449">
    <property type="entry name" value="ATPASE_A"/>
    <property type="match status" value="1"/>
</dbReference>
<proteinExistence type="inferred from homology"/>
<sequence length="248" mass="27226">MNVLPCSINTLKGLYEISGVEVGQHFYWQIGGFQVHAQVLITSWVVIAILLGSAAIAVRNPQTIPTDGQNFFEYVLEFIRDVSKTQIGEEEYGPWVPFIGTLFLFIFVSNWSGALLPWRIIQLPHGELAAPTNDINTTVALALPTSVAYFYAGLTKKGLGYFGKYIQPTPILLPINVLEDFTKPLSLSFRLFGNILADELVVVVLVSLVPLVIPIPVMFLGLFTSGIQALIFATLAAAYIGESMEGHH</sequence>
<reference key="1">
    <citation type="journal article" date="2004" name="Mol. Biol. Evol.">
        <title>The chloroplast genome of Nymphaea alba: whole-genome analyses and the problem of identifying the most basal angiosperm.</title>
        <authorList>
            <person name="Goremykin V.V."/>
            <person name="Hirsch-Ernst K.I."/>
            <person name="Woelfl S."/>
            <person name="Hellwig F.H."/>
        </authorList>
    </citation>
    <scope>NUCLEOTIDE SEQUENCE [LARGE SCALE GENOMIC DNA]</scope>
</reference>
<evidence type="ECO:0000255" key="1">
    <source>
        <dbReference type="HAMAP-Rule" id="MF_01393"/>
    </source>
</evidence>
<feature type="chain" id="PRO_0000362578" description="ATP synthase subunit a, chloroplastic">
    <location>
        <begin position="1"/>
        <end position="248"/>
    </location>
</feature>
<feature type="transmembrane region" description="Helical" evidence="1">
    <location>
        <begin position="38"/>
        <end position="58"/>
    </location>
</feature>
<feature type="transmembrane region" description="Helical" evidence="1">
    <location>
        <begin position="96"/>
        <end position="116"/>
    </location>
</feature>
<feature type="transmembrane region" description="Helical" evidence="1">
    <location>
        <begin position="135"/>
        <end position="155"/>
    </location>
</feature>
<feature type="transmembrane region" description="Helical" evidence="1">
    <location>
        <begin position="200"/>
        <end position="220"/>
    </location>
</feature>
<feature type="transmembrane region" description="Helical" evidence="1">
    <location>
        <begin position="221"/>
        <end position="241"/>
    </location>
</feature>